<dbReference type="EMBL" id="CP000749">
    <property type="protein sequence ID" value="ABR73021.1"/>
    <property type="molecule type" value="Genomic_DNA"/>
</dbReference>
<dbReference type="SMR" id="A6W2U2"/>
<dbReference type="STRING" id="400668.Mmwyl1_4125"/>
<dbReference type="KEGG" id="mmw:Mmwyl1_4125"/>
<dbReference type="eggNOG" id="COG0254">
    <property type="taxonomic scope" value="Bacteria"/>
</dbReference>
<dbReference type="HOGENOM" id="CLU_114306_4_0_6"/>
<dbReference type="OrthoDB" id="9803251at2"/>
<dbReference type="GO" id="GO:1990904">
    <property type="term" value="C:ribonucleoprotein complex"/>
    <property type="evidence" value="ECO:0007669"/>
    <property type="project" value="UniProtKB-KW"/>
</dbReference>
<dbReference type="GO" id="GO:0005840">
    <property type="term" value="C:ribosome"/>
    <property type="evidence" value="ECO:0007669"/>
    <property type="project" value="UniProtKB-KW"/>
</dbReference>
<dbReference type="GO" id="GO:0046872">
    <property type="term" value="F:metal ion binding"/>
    <property type="evidence" value="ECO:0007669"/>
    <property type="project" value="UniProtKB-KW"/>
</dbReference>
<dbReference type="GO" id="GO:0019843">
    <property type="term" value="F:rRNA binding"/>
    <property type="evidence" value="ECO:0007669"/>
    <property type="project" value="UniProtKB-KW"/>
</dbReference>
<dbReference type="GO" id="GO:0003735">
    <property type="term" value="F:structural constituent of ribosome"/>
    <property type="evidence" value="ECO:0007669"/>
    <property type="project" value="InterPro"/>
</dbReference>
<dbReference type="GO" id="GO:0006412">
    <property type="term" value="P:translation"/>
    <property type="evidence" value="ECO:0007669"/>
    <property type="project" value="UniProtKB-UniRule"/>
</dbReference>
<dbReference type="Gene3D" id="4.10.830.30">
    <property type="entry name" value="Ribosomal protein L31"/>
    <property type="match status" value="1"/>
</dbReference>
<dbReference type="HAMAP" id="MF_00501">
    <property type="entry name" value="Ribosomal_bL31_1"/>
    <property type="match status" value="1"/>
</dbReference>
<dbReference type="InterPro" id="IPR034704">
    <property type="entry name" value="Ribosomal_bL28/bL31-like_sf"/>
</dbReference>
<dbReference type="InterPro" id="IPR002150">
    <property type="entry name" value="Ribosomal_bL31"/>
</dbReference>
<dbReference type="InterPro" id="IPR027491">
    <property type="entry name" value="Ribosomal_bL31_A"/>
</dbReference>
<dbReference type="InterPro" id="IPR042105">
    <property type="entry name" value="Ribosomal_bL31_sf"/>
</dbReference>
<dbReference type="NCBIfam" id="TIGR00105">
    <property type="entry name" value="L31"/>
    <property type="match status" value="1"/>
</dbReference>
<dbReference type="NCBIfam" id="NF000612">
    <property type="entry name" value="PRK00019.1"/>
    <property type="match status" value="1"/>
</dbReference>
<dbReference type="NCBIfam" id="NF001809">
    <property type="entry name" value="PRK00528.1"/>
    <property type="match status" value="1"/>
</dbReference>
<dbReference type="PANTHER" id="PTHR33280">
    <property type="entry name" value="50S RIBOSOMAL PROTEIN L31, CHLOROPLASTIC"/>
    <property type="match status" value="1"/>
</dbReference>
<dbReference type="PANTHER" id="PTHR33280:SF6">
    <property type="entry name" value="LARGE RIBOSOMAL SUBUNIT PROTEIN BL31A"/>
    <property type="match status" value="1"/>
</dbReference>
<dbReference type="Pfam" id="PF01197">
    <property type="entry name" value="Ribosomal_L31"/>
    <property type="match status" value="1"/>
</dbReference>
<dbReference type="PRINTS" id="PR01249">
    <property type="entry name" value="RIBOSOMALL31"/>
</dbReference>
<dbReference type="SUPFAM" id="SSF143800">
    <property type="entry name" value="L28p-like"/>
    <property type="match status" value="1"/>
</dbReference>
<dbReference type="PROSITE" id="PS01143">
    <property type="entry name" value="RIBOSOMAL_L31"/>
    <property type="match status" value="1"/>
</dbReference>
<comment type="function">
    <text evidence="1">Binds the 23S rRNA.</text>
</comment>
<comment type="cofactor">
    <cofactor evidence="1">
        <name>Zn(2+)</name>
        <dbReference type="ChEBI" id="CHEBI:29105"/>
    </cofactor>
    <text evidence="1">Binds 1 zinc ion per subunit.</text>
</comment>
<comment type="subunit">
    <text evidence="1">Part of the 50S ribosomal subunit.</text>
</comment>
<comment type="similarity">
    <text evidence="1">Belongs to the bacterial ribosomal protein bL31 family. Type A subfamily.</text>
</comment>
<gene>
    <name evidence="1" type="primary">rpmE</name>
    <name type="ordered locus">Mmwyl1_4125</name>
</gene>
<protein>
    <recommendedName>
        <fullName evidence="1">Large ribosomal subunit protein bL31</fullName>
    </recommendedName>
    <alternativeName>
        <fullName evidence="2">50S ribosomal protein L31</fullName>
    </alternativeName>
</protein>
<organism>
    <name type="scientific">Marinomonas sp. (strain MWYL1)</name>
    <dbReference type="NCBI Taxonomy" id="400668"/>
    <lineage>
        <taxon>Bacteria</taxon>
        <taxon>Pseudomonadati</taxon>
        <taxon>Pseudomonadota</taxon>
        <taxon>Gammaproteobacteria</taxon>
        <taxon>Oceanospirillales</taxon>
        <taxon>Oceanospirillaceae</taxon>
        <taxon>Marinomonas</taxon>
    </lineage>
</organism>
<keyword id="KW-0479">Metal-binding</keyword>
<keyword id="KW-0687">Ribonucleoprotein</keyword>
<keyword id="KW-0689">Ribosomal protein</keyword>
<keyword id="KW-0694">RNA-binding</keyword>
<keyword id="KW-0699">rRNA-binding</keyword>
<keyword id="KW-0862">Zinc</keyword>
<reference key="1">
    <citation type="submission" date="2007-06" db="EMBL/GenBank/DDBJ databases">
        <title>Complete sequence of Marinomonas sp. MWYL1.</title>
        <authorList>
            <consortium name="US DOE Joint Genome Institute"/>
            <person name="Copeland A."/>
            <person name="Lucas S."/>
            <person name="Lapidus A."/>
            <person name="Barry K."/>
            <person name="Glavina del Rio T."/>
            <person name="Dalin E."/>
            <person name="Tice H."/>
            <person name="Pitluck S."/>
            <person name="Kiss H."/>
            <person name="Brettin T."/>
            <person name="Bruce D."/>
            <person name="Detter J.C."/>
            <person name="Han C."/>
            <person name="Schmutz J."/>
            <person name="Larimer F."/>
            <person name="Land M."/>
            <person name="Hauser L."/>
            <person name="Kyrpides N."/>
            <person name="Kim E."/>
            <person name="Johnston A.W.B."/>
            <person name="Todd J.D."/>
            <person name="Rogers R."/>
            <person name="Wexler M."/>
            <person name="Bond P.L."/>
            <person name="Li Y."/>
            <person name="Richardson P."/>
        </authorList>
    </citation>
    <scope>NUCLEOTIDE SEQUENCE [LARGE SCALE GENOMIC DNA]</scope>
    <source>
        <strain>MWYL1</strain>
    </source>
</reference>
<sequence length="71" mass="7894">MKKDIHPNYSAVTATCTCGNTLQLNSTLGSDLHVDVCSNCHPFYTGQQKMVDTGGRVDRFNKRFGARRTTK</sequence>
<name>RL31_MARMS</name>
<proteinExistence type="inferred from homology"/>
<evidence type="ECO:0000255" key="1">
    <source>
        <dbReference type="HAMAP-Rule" id="MF_00501"/>
    </source>
</evidence>
<evidence type="ECO:0000305" key="2"/>
<accession>A6W2U2</accession>
<feature type="chain" id="PRO_1000126657" description="Large ribosomal subunit protein bL31">
    <location>
        <begin position="1"/>
        <end position="71"/>
    </location>
</feature>
<feature type="binding site" evidence="1">
    <location>
        <position position="16"/>
    </location>
    <ligand>
        <name>Zn(2+)</name>
        <dbReference type="ChEBI" id="CHEBI:29105"/>
    </ligand>
</feature>
<feature type="binding site" evidence="1">
    <location>
        <position position="18"/>
    </location>
    <ligand>
        <name>Zn(2+)</name>
        <dbReference type="ChEBI" id="CHEBI:29105"/>
    </ligand>
</feature>
<feature type="binding site" evidence="1">
    <location>
        <position position="37"/>
    </location>
    <ligand>
        <name>Zn(2+)</name>
        <dbReference type="ChEBI" id="CHEBI:29105"/>
    </ligand>
</feature>
<feature type="binding site" evidence="1">
    <location>
        <position position="40"/>
    </location>
    <ligand>
        <name>Zn(2+)</name>
        <dbReference type="ChEBI" id="CHEBI:29105"/>
    </ligand>
</feature>